<name>YBEY_PSESM</name>
<reference key="1">
    <citation type="journal article" date="2003" name="Proc. Natl. Acad. Sci. U.S.A.">
        <title>The complete genome sequence of the Arabidopsis and tomato pathogen Pseudomonas syringae pv. tomato DC3000.</title>
        <authorList>
            <person name="Buell C.R."/>
            <person name="Joardar V."/>
            <person name="Lindeberg M."/>
            <person name="Selengut J."/>
            <person name="Paulsen I.T."/>
            <person name="Gwinn M.L."/>
            <person name="Dodson R.J."/>
            <person name="DeBoy R.T."/>
            <person name="Durkin A.S."/>
            <person name="Kolonay J.F."/>
            <person name="Madupu R."/>
            <person name="Daugherty S.C."/>
            <person name="Brinkac L.M."/>
            <person name="Beanan M.J."/>
            <person name="Haft D.H."/>
            <person name="Nelson W.C."/>
            <person name="Davidsen T.M."/>
            <person name="Zafar N."/>
            <person name="Zhou L."/>
            <person name="Liu J."/>
            <person name="Yuan Q."/>
            <person name="Khouri H.M."/>
            <person name="Fedorova N.B."/>
            <person name="Tran B."/>
            <person name="Russell D."/>
            <person name="Berry K.J."/>
            <person name="Utterback T.R."/>
            <person name="Van Aken S.E."/>
            <person name="Feldblyum T.V."/>
            <person name="D'Ascenzo M."/>
            <person name="Deng W.-L."/>
            <person name="Ramos A.R."/>
            <person name="Alfano J.R."/>
            <person name="Cartinhour S."/>
            <person name="Chatterjee A.K."/>
            <person name="Delaney T.P."/>
            <person name="Lazarowitz S.G."/>
            <person name="Martin G.B."/>
            <person name="Schneider D.J."/>
            <person name="Tang X."/>
            <person name="Bender C.L."/>
            <person name="White O."/>
            <person name="Fraser C.M."/>
            <person name="Collmer A."/>
        </authorList>
    </citation>
    <scope>NUCLEOTIDE SEQUENCE [LARGE SCALE GENOMIC DNA]</scope>
    <source>
        <strain>ATCC BAA-871 / DC3000</strain>
    </source>
</reference>
<sequence length="166" mass="18879">MLELDLQIASETPAPDEARFRLWCEMGLRQRSADSELTIRLVDETEGRELNHTWRHKNYATNVLSFPADVPDDMLDIPLLGDLVICVPVVNREAAEQGKSIDAHWAHMVIHGCLHLLGYDHIDDEEAEEMEALERTLLEELGYPDPYADDESADHPHSDTPSKDHE</sequence>
<accession>Q87VX9</accession>
<protein>
    <recommendedName>
        <fullName evidence="1">Endoribonuclease YbeY</fullName>
        <ecNumber evidence="1">3.1.-.-</ecNumber>
    </recommendedName>
</protein>
<keyword id="KW-0963">Cytoplasm</keyword>
<keyword id="KW-0255">Endonuclease</keyword>
<keyword id="KW-0378">Hydrolase</keyword>
<keyword id="KW-0479">Metal-binding</keyword>
<keyword id="KW-0540">Nuclease</keyword>
<keyword id="KW-1185">Reference proteome</keyword>
<keyword id="KW-0690">Ribosome biogenesis</keyword>
<keyword id="KW-0698">rRNA processing</keyword>
<keyword id="KW-0862">Zinc</keyword>
<gene>
    <name evidence="1" type="primary">ybeY</name>
    <name type="ordered locus">PSPTO_4806</name>
</gene>
<dbReference type="EC" id="3.1.-.-" evidence="1"/>
<dbReference type="EMBL" id="AE016853">
    <property type="protein sequence ID" value="AAO58235.1"/>
    <property type="molecule type" value="Genomic_DNA"/>
</dbReference>
<dbReference type="RefSeq" id="NP_794540.1">
    <property type="nucleotide sequence ID" value="NC_004578.1"/>
</dbReference>
<dbReference type="RefSeq" id="WP_011105185.1">
    <property type="nucleotide sequence ID" value="NC_004578.1"/>
</dbReference>
<dbReference type="SMR" id="Q87VX9"/>
<dbReference type="STRING" id="223283.PSPTO_4806"/>
<dbReference type="GeneID" id="1186489"/>
<dbReference type="KEGG" id="pst:PSPTO_4806"/>
<dbReference type="PATRIC" id="fig|223283.9.peg.4917"/>
<dbReference type="eggNOG" id="COG0319">
    <property type="taxonomic scope" value="Bacteria"/>
</dbReference>
<dbReference type="HOGENOM" id="CLU_106710_0_1_6"/>
<dbReference type="OrthoDB" id="9807740at2"/>
<dbReference type="PhylomeDB" id="Q87VX9"/>
<dbReference type="Proteomes" id="UP000002515">
    <property type="component" value="Chromosome"/>
</dbReference>
<dbReference type="GO" id="GO:0005737">
    <property type="term" value="C:cytoplasm"/>
    <property type="evidence" value="ECO:0007669"/>
    <property type="project" value="UniProtKB-SubCell"/>
</dbReference>
<dbReference type="GO" id="GO:0004222">
    <property type="term" value="F:metalloendopeptidase activity"/>
    <property type="evidence" value="ECO:0007669"/>
    <property type="project" value="InterPro"/>
</dbReference>
<dbReference type="GO" id="GO:0004521">
    <property type="term" value="F:RNA endonuclease activity"/>
    <property type="evidence" value="ECO:0007669"/>
    <property type="project" value="UniProtKB-UniRule"/>
</dbReference>
<dbReference type="GO" id="GO:0008270">
    <property type="term" value="F:zinc ion binding"/>
    <property type="evidence" value="ECO:0007669"/>
    <property type="project" value="UniProtKB-UniRule"/>
</dbReference>
<dbReference type="GO" id="GO:0006364">
    <property type="term" value="P:rRNA processing"/>
    <property type="evidence" value="ECO:0007669"/>
    <property type="project" value="UniProtKB-UniRule"/>
</dbReference>
<dbReference type="Gene3D" id="3.40.390.30">
    <property type="entry name" value="Metalloproteases ('zincins'), catalytic domain"/>
    <property type="match status" value="1"/>
</dbReference>
<dbReference type="HAMAP" id="MF_00009">
    <property type="entry name" value="Endoribonucl_YbeY"/>
    <property type="match status" value="1"/>
</dbReference>
<dbReference type="InterPro" id="IPR023091">
    <property type="entry name" value="MetalPrtase_cat_dom_sf_prd"/>
</dbReference>
<dbReference type="InterPro" id="IPR002036">
    <property type="entry name" value="YbeY"/>
</dbReference>
<dbReference type="InterPro" id="IPR020549">
    <property type="entry name" value="YbeY_CS"/>
</dbReference>
<dbReference type="NCBIfam" id="TIGR00043">
    <property type="entry name" value="rRNA maturation RNase YbeY"/>
    <property type="match status" value="1"/>
</dbReference>
<dbReference type="PANTHER" id="PTHR46986">
    <property type="entry name" value="ENDORIBONUCLEASE YBEY, CHLOROPLASTIC"/>
    <property type="match status" value="1"/>
</dbReference>
<dbReference type="PANTHER" id="PTHR46986:SF1">
    <property type="entry name" value="ENDORIBONUCLEASE YBEY, CHLOROPLASTIC"/>
    <property type="match status" value="1"/>
</dbReference>
<dbReference type="Pfam" id="PF02130">
    <property type="entry name" value="YbeY"/>
    <property type="match status" value="1"/>
</dbReference>
<dbReference type="SUPFAM" id="SSF55486">
    <property type="entry name" value="Metalloproteases ('zincins'), catalytic domain"/>
    <property type="match status" value="1"/>
</dbReference>
<dbReference type="PROSITE" id="PS01306">
    <property type="entry name" value="UPF0054"/>
    <property type="match status" value="1"/>
</dbReference>
<organism>
    <name type="scientific">Pseudomonas syringae pv. tomato (strain ATCC BAA-871 / DC3000)</name>
    <dbReference type="NCBI Taxonomy" id="223283"/>
    <lineage>
        <taxon>Bacteria</taxon>
        <taxon>Pseudomonadati</taxon>
        <taxon>Pseudomonadota</taxon>
        <taxon>Gammaproteobacteria</taxon>
        <taxon>Pseudomonadales</taxon>
        <taxon>Pseudomonadaceae</taxon>
        <taxon>Pseudomonas</taxon>
    </lineage>
</organism>
<feature type="chain" id="PRO_0000102512" description="Endoribonuclease YbeY">
    <location>
        <begin position="1"/>
        <end position="166"/>
    </location>
</feature>
<feature type="region of interest" description="Disordered" evidence="2">
    <location>
        <begin position="141"/>
        <end position="166"/>
    </location>
</feature>
<feature type="compositionally biased region" description="Basic and acidic residues" evidence="2">
    <location>
        <begin position="153"/>
        <end position="166"/>
    </location>
</feature>
<feature type="binding site" evidence="1">
    <location>
        <position position="111"/>
    </location>
    <ligand>
        <name>Zn(2+)</name>
        <dbReference type="ChEBI" id="CHEBI:29105"/>
        <note>catalytic</note>
    </ligand>
</feature>
<feature type="binding site" evidence="1">
    <location>
        <position position="115"/>
    </location>
    <ligand>
        <name>Zn(2+)</name>
        <dbReference type="ChEBI" id="CHEBI:29105"/>
        <note>catalytic</note>
    </ligand>
</feature>
<feature type="binding site" evidence="1">
    <location>
        <position position="121"/>
    </location>
    <ligand>
        <name>Zn(2+)</name>
        <dbReference type="ChEBI" id="CHEBI:29105"/>
        <note>catalytic</note>
    </ligand>
</feature>
<comment type="function">
    <text evidence="1">Single strand-specific metallo-endoribonuclease involved in late-stage 70S ribosome quality control and in maturation of the 3' terminus of the 16S rRNA.</text>
</comment>
<comment type="cofactor">
    <cofactor evidence="1">
        <name>Zn(2+)</name>
        <dbReference type="ChEBI" id="CHEBI:29105"/>
    </cofactor>
    <text evidence="1">Binds 1 zinc ion.</text>
</comment>
<comment type="subcellular location">
    <subcellularLocation>
        <location evidence="1">Cytoplasm</location>
    </subcellularLocation>
</comment>
<comment type="similarity">
    <text evidence="1">Belongs to the endoribonuclease YbeY family.</text>
</comment>
<proteinExistence type="inferred from homology"/>
<evidence type="ECO:0000255" key="1">
    <source>
        <dbReference type="HAMAP-Rule" id="MF_00009"/>
    </source>
</evidence>
<evidence type="ECO:0000256" key="2">
    <source>
        <dbReference type="SAM" id="MobiDB-lite"/>
    </source>
</evidence>